<reference key="1">
    <citation type="submission" date="2006-12" db="EMBL/GenBank/DDBJ databases">
        <title>Complete sequence of Mycobacterium vanbaalenii PYR-1.</title>
        <authorList>
            <consortium name="US DOE Joint Genome Institute"/>
            <person name="Copeland A."/>
            <person name="Lucas S."/>
            <person name="Lapidus A."/>
            <person name="Barry K."/>
            <person name="Detter J.C."/>
            <person name="Glavina del Rio T."/>
            <person name="Hammon N."/>
            <person name="Israni S."/>
            <person name="Dalin E."/>
            <person name="Tice H."/>
            <person name="Pitluck S."/>
            <person name="Singan V."/>
            <person name="Schmutz J."/>
            <person name="Larimer F."/>
            <person name="Land M."/>
            <person name="Hauser L."/>
            <person name="Kyrpides N."/>
            <person name="Anderson I.J."/>
            <person name="Miller C."/>
            <person name="Richardson P."/>
        </authorList>
    </citation>
    <scope>NUCLEOTIDE SEQUENCE [LARGE SCALE GENOMIC DNA]</scope>
    <source>
        <strain>DSM 7251 / JCM 13017 / BCRC 16820 / KCTC 9966 / NRRL B-24157 / PYR-1</strain>
    </source>
</reference>
<feature type="chain" id="PRO_0000380611" description="Uncharacterized methyltransferase Mvan_0241">
    <location>
        <begin position="1"/>
        <end position="255"/>
    </location>
</feature>
<comment type="similarity">
    <text evidence="1">Belongs to the methyltransferase superfamily.</text>
</comment>
<evidence type="ECO:0000305" key="1"/>
<organism>
    <name type="scientific">Mycolicibacterium vanbaalenii (strain DSM 7251 / JCM 13017 / BCRC 16820 / KCTC 9966 / NRRL B-24157 / PYR-1)</name>
    <name type="common">Mycobacterium vanbaalenii</name>
    <dbReference type="NCBI Taxonomy" id="350058"/>
    <lineage>
        <taxon>Bacteria</taxon>
        <taxon>Bacillati</taxon>
        <taxon>Actinomycetota</taxon>
        <taxon>Actinomycetes</taxon>
        <taxon>Mycobacteriales</taxon>
        <taxon>Mycobacteriaceae</taxon>
        <taxon>Mycolicibacterium</taxon>
    </lineage>
</organism>
<sequence length="255" mass="27659">MPATDRFSDRATLARSVRLLTAFRFEQSAPDRFYGALADDTVAMVGDLWESATGESQAGLTLLDVGGGPGYFASAFTAAGVNYIGVEPDPREMHAAAALTHERAGTFVRASGTALPFADDSVDVCLSSNVAEHVAQPWRLGDEMLRVTRPGGLAVLSYTVWLGPFGGHEMGLTHYLGGRRAAEMYTRRHGHRPKNDYGSSLFAVHARDGLRWAQGTGALLAAFPRYHPRWAWGLTKVPGLREFLVSNLVLVLRPC</sequence>
<proteinExistence type="inferred from homology"/>
<keyword id="KW-0489">Methyltransferase</keyword>
<keyword id="KW-0808">Transferase</keyword>
<protein>
    <recommendedName>
        <fullName>Uncharacterized methyltransferase Mvan_0241</fullName>
        <ecNumber>2.1.1.-</ecNumber>
    </recommendedName>
</protein>
<gene>
    <name type="ordered locus">Mvan_0241</name>
</gene>
<name>Y241_MYCVP</name>
<dbReference type="EC" id="2.1.1.-"/>
<dbReference type="EMBL" id="CP000511">
    <property type="protein sequence ID" value="ABM11090.1"/>
    <property type="molecule type" value="Genomic_DNA"/>
</dbReference>
<dbReference type="RefSeq" id="WP_011777564.1">
    <property type="nucleotide sequence ID" value="NC_008726.1"/>
</dbReference>
<dbReference type="SMR" id="A1T1P0"/>
<dbReference type="STRING" id="350058.Mvan_0241"/>
<dbReference type="KEGG" id="mva:Mvan_0241"/>
<dbReference type="eggNOG" id="COG0500">
    <property type="taxonomic scope" value="Bacteria"/>
</dbReference>
<dbReference type="HOGENOM" id="CLU_073035_0_0_11"/>
<dbReference type="Proteomes" id="UP000009159">
    <property type="component" value="Chromosome"/>
</dbReference>
<dbReference type="GO" id="GO:0008757">
    <property type="term" value="F:S-adenosylmethionine-dependent methyltransferase activity"/>
    <property type="evidence" value="ECO:0007669"/>
    <property type="project" value="InterPro"/>
</dbReference>
<dbReference type="GO" id="GO:0032259">
    <property type="term" value="P:methylation"/>
    <property type="evidence" value="ECO:0007669"/>
    <property type="project" value="UniProtKB-KW"/>
</dbReference>
<dbReference type="CDD" id="cd02440">
    <property type="entry name" value="AdoMet_MTases"/>
    <property type="match status" value="1"/>
</dbReference>
<dbReference type="Gene3D" id="3.40.50.150">
    <property type="entry name" value="Vaccinia Virus protein VP39"/>
    <property type="match status" value="1"/>
</dbReference>
<dbReference type="InterPro" id="IPR013216">
    <property type="entry name" value="Methyltransf_11"/>
</dbReference>
<dbReference type="InterPro" id="IPR029063">
    <property type="entry name" value="SAM-dependent_MTases_sf"/>
</dbReference>
<dbReference type="PANTHER" id="PTHR43591:SF24">
    <property type="entry name" value="2-METHOXY-6-POLYPRENYL-1,4-BENZOQUINOL METHYLASE, MITOCHONDRIAL"/>
    <property type="match status" value="1"/>
</dbReference>
<dbReference type="PANTHER" id="PTHR43591">
    <property type="entry name" value="METHYLTRANSFERASE"/>
    <property type="match status" value="1"/>
</dbReference>
<dbReference type="Pfam" id="PF08241">
    <property type="entry name" value="Methyltransf_11"/>
    <property type="match status" value="1"/>
</dbReference>
<dbReference type="SUPFAM" id="SSF53335">
    <property type="entry name" value="S-adenosyl-L-methionine-dependent methyltransferases"/>
    <property type="match status" value="1"/>
</dbReference>
<accession>A1T1P0</accession>